<proteinExistence type="inferred from homology"/>
<comment type="catalytic activity">
    <reaction evidence="1">
        <text>5-amino-1-(5-phospho-D-ribosyl)imidazole-4-carboxylate + L-aspartate + ATP = (2S)-2-[5-amino-1-(5-phospho-beta-D-ribosyl)imidazole-4-carboxamido]succinate + ADP + phosphate + 2 H(+)</text>
        <dbReference type="Rhea" id="RHEA:22628"/>
        <dbReference type="ChEBI" id="CHEBI:15378"/>
        <dbReference type="ChEBI" id="CHEBI:29991"/>
        <dbReference type="ChEBI" id="CHEBI:30616"/>
        <dbReference type="ChEBI" id="CHEBI:43474"/>
        <dbReference type="ChEBI" id="CHEBI:58443"/>
        <dbReference type="ChEBI" id="CHEBI:77657"/>
        <dbReference type="ChEBI" id="CHEBI:456216"/>
        <dbReference type="EC" id="6.3.2.6"/>
    </reaction>
</comment>
<comment type="pathway">
    <text evidence="1">Purine metabolism; IMP biosynthesis via de novo pathway; 5-amino-1-(5-phospho-D-ribosyl)imidazole-4-carboxamide from 5-amino-1-(5-phospho-D-ribosyl)imidazole-4-carboxylate: step 1/2.</text>
</comment>
<comment type="similarity">
    <text evidence="1">Belongs to the SAICAR synthetase family.</text>
</comment>
<gene>
    <name evidence="1" type="primary">purC</name>
    <name type="ordered locus">Jann_2545</name>
</gene>
<name>PUR7_JANSC</name>
<keyword id="KW-0067">ATP-binding</keyword>
<keyword id="KW-0436">Ligase</keyword>
<keyword id="KW-0547">Nucleotide-binding</keyword>
<keyword id="KW-0658">Purine biosynthesis</keyword>
<keyword id="KW-1185">Reference proteome</keyword>
<sequence>MARRKLVYEGKAKTLYEGPEPGTLVQYFKDDATAGNGEKRDVIDGKGVLNNRLSEFFMKGLGNIGVPTHFIKRLNMREQLIRAVEIIPLEVVVRNTAAGSICSRLGIEEGTPMPRPIVEFYFKNDDLNDPIVSEEHIIAFGWAAQQDLDDMVSLALRVNDFLSGLMLGVGIKLVDFKIEIGRIWDGDFMRLIVADEISPDSCRLWDIETGRKLDKDVFRRDLGDLADAYTEVAKRLGIMPQGPVGAIKPTLIN</sequence>
<evidence type="ECO:0000255" key="1">
    <source>
        <dbReference type="HAMAP-Rule" id="MF_00137"/>
    </source>
</evidence>
<dbReference type="EC" id="6.3.2.6" evidence="1"/>
<dbReference type="EMBL" id="CP000264">
    <property type="protein sequence ID" value="ABD55462.1"/>
    <property type="molecule type" value="Genomic_DNA"/>
</dbReference>
<dbReference type="RefSeq" id="WP_011455666.1">
    <property type="nucleotide sequence ID" value="NC_007802.1"/>
</dbReference>
<dbReference type="SMR" id="Q28PA0"/>
<dbReference type="STRING" id="290400.Jann_2545"/>
<dbReference type="KEGG" id="jan:Jann_2545"/>
<dbReference type="eggNOG" id="COG0152">
    <property type="taxonomic scope" value="Bacteria"/>
</dbReference>
<dbReference type="HOGENOM" id="CLU_061495_2_0_5"/>
<dbReference type="OrthoDB" id="9801549at2"/>
<dbReference type="UniPathway" id="UPA00074">
    <property type="reaction ID" value="UER00131"/>
</dbReference>
<dbReference type="Proteomes" id="UP000008326">
    <property type="component" value="Chromosome"/>
</dbReference>
<dbReference type="GO" id="GO:0005829">
    <property type="term" value="C:cytosol"/>
    <property type="evidence" value="ECO:0007669"/>
    <property type="project" value="TreeGrafter"/>
</dbReference>
<dbReference type="GO" id="GO:0005524">
    <property type="term" value="F:ATP binding"/>
    <property type="evidence" value="ECO:0007669"/>
    <property type="project" value="UniProtKB-KW"/>
</dbReference>
<dbReference type="GO" id="GO:0004639">
    <property type="term" value="F:phosphoribosylaminoimidazolesuccinocarboxamide synthase activity"/>
    <property type="evidence" value="ECO:0007669"/>
    <property type="project" value="UniProtKB-UniRule"/>
</dbReference>
<dbReference type="GO" id="GO:0006189">
    <property type="term" value="P:'de novo' IMP biosynthetic process"/>
    <property type="evidence" value="ECO:0007669"/>
    <property type="project" value="UniProtKB-UniRule"/>
</dbReference>
<dbReference type="GO" id="GO:0009236">
    <property type="term" value="P:cobalamin biosynthetic process"/>
    <property type="evidence" value="ECO:0007669"/>
    <property type="project" value="InterPro"/>
</dbReference>
<dbReference type="CDD" id="cd01415">
    <property type="entry name" value="SAICAR_synt_PurC"/>
    <property type="match status" value="1"/>
</dbReference>
<dbReference type="FunFam" id="3.30.470.20:FF:000006">
    <property type="entry name" value="Phosphoribosylaminoimidazole-succinocarboxamide synthase"/>
    <property type="match status" value="1"/>
</dbReference>
<dbReference type="Gene3D" id="3.30.470.20">
    <property type="entry name" value="ATP-grasp fold, B domain"/>
    <property type="match status" value="1"/>
</dbReference>
<dbReference type="Gene3D" id="3.30.200.20">
    <property type="entry name" value="Phosphorylase Kinase, domain 1"/>
    <property type="match status" value="1"/>
</dbReference>
<dbReference type="HAMAP" id="MF_00137">
    <property type="entry name" value="SAICAR_synth"/>
    <property type="match status" value="1"/>
</dbReference>
<dbReference type="InterPro" id="IPR028923">
    <property type="entry name" value="SAICAR_synt/ADE2_N"/>
</dbReference>
<dbReference type="InterPro" id="IPR033934">
    <property type="entry name" value="SAICAR_synt_PurC"/>
</dbReference>
<dbReference type="InterPro" id="IPR001636">
    <property type="entry name" value="SAICAR_synth"/>
</dbReference>
<dbReference type="InterPro" id="IPR050089">
    <property type="entry name" value="SAICAR_synthetase"/>
</dbReference>
<dbReference type="InterPro" id="IPR018236">
    <property type="entry name" value="SAICAR_synthetase_CS"/>
</dbReference>
<dbReference type="NCBIfam" id="TIGR00081">
    <property type="entry name" value="purC"/>
    <property type="match status" value="1"/>
</dbReference>
<dbReference type="PANTHER" id="PTHR43599">
    <property type="entry name" value="MULTIFUNCTIONAL PROTEIN ADE2"/>
    <property type="match status" value="1"/>
</dbReference>
<dbReference type="PANTHER" id="PTHR43599:SF3">
    <property type="entry name" value="SI:DKEY-6E2.2"/>
    <property type="match status" value="1"/>
</dbReference>
<dbReference type="Pfam" id="PF01259">
    <property type="entry name" value="SAICAR_synt"/>
    <property type="match status" value="1"/>
</dbReference>
<dbReference type="SUPFAM" id="SSF56104">
    <property type="entry name" value="SAICAR synthase-like"/>
    <property type="match status" value="1"/>
</dbReference>
<dbReference type="PROSITE" id="PS01057">
    <property type="entry name" value="SAICAR_SYNTHETASE_1"/>
    <property type="match status" value="1"/>
</dbReference>
<dbReference type="PROSITE" id="PS01058">
    <property type="entry name" value="SAICAR_SYNTHETASE_2"/>
    <property type="match status" value="1"/>
</dbReference>
<organism>
    <name type="scientific">Jannaschia sp. (strain CCS1)</name>
    <dbReference type="NCBI Taxonomy" id="290400"/>
    <lineage>
        <taxon>Bacteria</taxon>
        <taxon>Pseudomonadati</taxon>
        <taxon>Pseudomonadota</taxon>
        <taxon>Alphaproteobacteria</taxon>
        <taxon>Rhodobacterales</taxon>
        <taxon>Roseobacteraceae</taxon>
        <taxon>Jannaschia</taxon>
    </lineage>
</organism>
<feature type="chain" id="PRO_1000018716" description="Phosphoribosylaminoimidazole-succinocarboxamide synthase">
    <location>
        <begin position="1"/>
        <end position="253"/>
    </location>
</feature>
<reference key="1">
    <citation type="submission" date="2006-02" db="EMBL/GenBank/DDBJ databases">
        <title>Complete sequence of chromosome of Jannaschia sp. CCS1.</title>
        <authorList>
            <consortium name="US DOE Joint Genome Institute"/>
            <person name="Copeland A."/>
            <person name="Lucas S."/>
            <person name="Lapidus A."/>
            <person name="Barry K."/>
            <person name="Detter J.C."/>
            <person name="Glavina del Rio T."/>
            <person name="Hammon N."/>
            <person name="Israni S."/>
            <person name="Pitluck S."/>
            <person name="Brettin T."/>
            <person name="Bruce D."/>
            <person name="Han C."/>
            <person name="Tapia R."/>
            <person name="Gilna P."/>
            <person name="Chertkov O."/>
            <person name="Saunders E."/>
            <person name="Schmutz J."/>
            <person name="Larimer F."/>
            <person name="Land M."/>
            <person name="Kyrpides N."/>
            <person name="Lykidis A."/>
            <person name="Moran M.A."/>
            <person name="Belas R."/>
            <person name="Ye W."/>
            <person name="Buchan A."/>
            <person name="Gonzalez J.M."/>
            <person name="Schell M.A."/>
            <person name="Richardson P."/>
        </authorList>
    </citation>
    <scope>NUCLEOTIDE SEQUENCE [LARGE SCALE GENOMIC DNA]</scope>
    <source>
        <strain>CCS1</strain>
    </source>
</reference>
<accession>Q28PA0</accession>
<protein>
    <recommendedName>
        <fullName evidence="1">Phosphoribosylaminoimidazole-succinocarboxamide synthase</fullName>
        <ecNumber evidence="1">6.3.2.6</ecNumber>
    </recommendedName>
    <alternativeName>
        <fullName evidence="1">SAICAR synthetase</fullName>
    </alternativeName>
</protein>